<accession>Q6FT60</accession>
<gene>
    <name type="primary">RRG1</name>
    <name type="ordered locus">CAGL0G05159g</name>
</gene>
<organism>
    <name type="scientific">Candida glabrata (strain ATCC 2001 / BCRC 20586 / JCM 3761 / NBRC 0622 / NRRL Y-65 / CBS 138)</name>
    <name type="common">Yeast</name>
    <name type="synonym">Nakaseomyces glabratus</name>
    <dbReference type="NCBI Taxonomy" id="284593"/>
    <lineage>
        <taxon>Eukaryota</taxon>
        <taxon>Fungi</taxon>
        <taxon>Dikarya</taxon>
        <taxon>Ascomycota</taxon>
        <taxon>Saccharomycotina</taxon>
        <taxon>Saccharomycetes</taxon>
        <taxon>Saccharomycetales</taxon>
        <taxon>Saccharomycetaceae</taxon>
        <taxon>Nakaseomyces</taxon>
    </lineage>
</organism>
<sequence length="377" mass="44847">MITHFCELAAHRNYVLALYRHSLRNVSRINSGFVKHKMKKVITNEARKHKNDKSSWSIYRRLKELKLLSDKLEDDQVNDAYNLLDSFMKSVKKPKNELKGHLMKIRTEIETNKNIQDKTRLTRLNLLHRYIAKKQQNQLLTKHIPDEYKEKLLLPLALHEKGILRLAAIRNQFKKGGYHAKLSFTMAGKTRIWFIRSMLNKRKKQSLRLRNLITSEKRRYLEVCKIVESLNENANWALHEAIWERYLDDGYLHATSSKGYLKMVEIEDNSVKLQNQNDSKVVKCQRLQQWLSPIQSSILSLENYLNQRQMKYAKLKTKILEPKGVYDYYQKKSKRVFQNHMKTYKRMVKNELPFVNPFIERLSIGSILKRNGINVKY</sequence>
<feature type="chain" id="PRO_0000402245" description="Required for respiratory growth protein 1, mitochondrial">
    <location>
        <begin position="1"/>
        <end position="377"/>
    </location>
</feature>
<reference key="1">
    <citation type="journal article" date="2004" name="Nature">
        <title>Genome evolution in yeasts.</title>
        <authorList>
            <person name="Dujon B."/>
            <person name="Sherman D."/>
            <person name="Fischer G."/>
            <person name="Durrens P."/>
            <person name="Casaregola S."/>
            <person name="Lafontaine I."/>
            <person name="de Montigny J."/>
            <person name="Marck C."/>
            <person name="Neuveglise C."/>
            <person name="Talla E."/>
            <person name="Goffard N."/>
            <person name="Frangeul L."/>
            <person name="Aigle M."/>
            <person name="Anthouard V."/>
            <person name="Babour A."/>
            <person name="Barbe V."/>
            <person name="Barnay S."/>
            <person name="Blanchin S."/>
            <person name="Beckerich J.-M."/>
            <person name="Beyne E."/>
            <person name="Bleykasten C."/>
            <person name="Boisrame A."/>
            <person name="Boyer J."/>
            <person name="Cattolico L."/>
            <person name="Confanioleri F."/>
            <person name="de Daruvar A."/>
            <person name="Despons L."/>
            <person name="Fabre E."/>
            <person name="Fairhead C."/>
            <person name="Ferry-Dumazet H."/>
            <person name="Groppi A."/>
            <person name="Hantraye F."/>
            <person name="Hennequin C."/>
            <person name="Jauniaux N."/>
            <person name="Joyet P."/>
            <person name="Kachouri R."/>
            <person name="Kerrest A."/>
            <person name="Koszul R."/>
            <person name="Lemaire M."/>
            <person name="Lesur I."/>
            <person name="Ma L."/>
            <person name="Muller H."/>
            <person name="Nicaud J.-M."/>
            <person name="Nikolski M."/>
            <person name="Oztas S."/>
            <person name="Ozier-Kalogeropoulos O."/>
            <person name="Pellenz S."/>
            <person name="Potier S."/>
            <person name="Richard G.-F."/>
            <person name="Straub M.-L."/>
            <person name="Suleau A."/>
            <person name="Swennen D."/>
            <person name="Tekaia F."/>
            <person name="Wesolowski-Louvel M."/>
            <person name="Westhof E."/>
            <person name="Wirth B."/>
            <person name="Zeniou-Meyer M."/>
            <person name="Zivanovic Y."/>
            <person name="Bolotin-Fukuhara M."/>
            <person name="Thierry A."/>
            <person name="Bouchier C."/>
            <person name="Caudron B."/>
            <person name="Scarpelli C."/>
            <person name="Gaillardin C."/>
            <person name="Weissenbach J."/>
            <person name="Wincker P."/>
            <person name="Souciet J.-L."/>
        </authorList>
    </citation>
    <scope>NUCLEOTIDE SEQUENCE [LARGE SCALE GENOMIC DNA]</scope>
    <source>
        <strain>ATCC 2001 / BCRC 20586 / JCM 3761 / NBRC 0622 / NRRL Y-65 / CBS 138</strain>
    </source>
</reference>
<evidence type="ECO:0000250" key="1"/>
<evidence type="ECO:0000305" key="2"/>
<name>RRG1_CANGA</name>
<dbReference type="EMBL" id="CR380953">
    <property type="protein sequence ID" value="CAG59511.1"/>
    <property type="molecule type" value="Genomic_DNA"/>
</dbReference>
<dbReference type="RefSeq" id="XP_446584.1">
    <property type="nucleotide sequence ID" value="XM_446584.1"/>
</dbReference>
<dbReference type="SMR" id="Q6FT60"/>
<dbReference type="FunCoup" id="Q6FT60">
    <property type="interactions" value="36"/>
</dbReference>
<dbReference type="EnsemblFungi" id="CAGL0G05159g-T">
    <property type="protein sequence ID" value="CAGL0G05159g-T-p1"/>
    <property type="gene ID" value="CAGL0G05159g"/>
</dbReference>
<dbReference type="KEGG" id="cgr:2887992"/>
<dbReference type="CGD" id="CAL0130312">
    <property type="gene designation" value="CAGL0G05159g"/>
</dbReference>
<dbReference type="VEuPathDB" id="FungiDB:CAGL0G05159g"/>
<dbReference type="eggNOG" id="ENOG502RYGE">
    <property type="taxonomic scope" value="Eukaryota"/>
</dbReference>
<dbReference type="HOGENOM" id="CLU_062256_0_0_1"/>
<dbReference type="InParanoid" id="Q6FT60"/>
<dbReference type="Proteomes" id="UP000002428">
    <property type="component" value="Chromosome G"/>
</dbReference>
<dbReference type="GO" id="GO:0099617">
    <property type="term" value="C:matrix side of mitochondrial inner membrane"/>
    <property type="evidence" value="ECO:0007669"/>
    <property type="project" value="EnsemblFungi"/>
</dbReference>
<dbReference type="GO" id="GO:0000002">
    <property type="term" value="P:mitochondrial genome maintenance"/>
    <property type="evidence" value="ECO:0007669"/>
    <property type="project" value="EnsemblFungi"/>
</dbReference>
<dbReference type="GO" id="GO:0097745">
    <property type="term" value="P:mitochondrial tRNA 5'-end processing"/>
    <property type="evidence" value="ECO:0007669"/>
    <property type="project" value="EnsemblFungi"/>
</dbReference>
<dbReference type="GO" id="GO:0007035">
    <property type="term" value="P:vacuolar acidification"/>
    <property type="evidence" value="ECO:0007669"/>
    <property type="project" value="EnsemblFungi"/>
</dbReference>
<comment type="function">
    <text evidence="1">Essential for respiratory growth and required for mitochondrial protein synthesis. Required for vacuolar acidification (By similarity).</text>
</comment>
<comment type="subcellular location">
    <subcellularLocation>
        <location evidence="1">Mitochondrion</location>
    </subcellularLocation>
</comment>
<comment type="similarity">
    <text evidence="2">Belongs to the RRG1 family.</text>
</comment>
<proteinExistence type="inferred from homology"/>
<protein>
    <recommendedName>
        <fullName>Required for respiratory growth protein 1, mitochondrial</fullName>
    </recommendedName>
</protein>
<keyword id="KW-0496">Mitochondrion</keyword>
<keyword id="KW-1185">Reference proteome</keyword>